<comment type="similarity">
    <text evidence="2">Belongs to the bacterial ribosomal protein bL27 family.</text>
</comment>
<reference key="1">
    <citation type="journal article" date="1998" name="Microbiology">
        <title>Identification and sequencing of the groE operon and flanking genes of Lawsonia intracellularis: use in phylogeny.</title>
        <authorList>
            <person name="Dale C.J.H."/>
            <person name="Moses E.K."/>
            <person name="Ong C.C."/>
            <person name="Morrow C.J."/>
            <person name="Reed M.B."/>
            <person name="Hasse D."/>
            <person name="Strugnell R.A."/>
        </authorList>
    </citation>
    <scope>NUCLEOTIDE SEQUENCE [GENOMIC DNA]</scope>
</reference>
<keyword id="KW-0687">Ribonucleoprotein</keyword>
<keyword id="KW-0689">Ribosomal protein</keyword>
<gene>
    <name type="primary">rpmA</name>
</gene>
<feature type="chain" id="PRO_0000181106" description="Large ribosomal subunit protein bL27">
    <location>
        <begin position="1"/>
        <end position="88"/>
    </location>
</feature>
<feature type="region of interest" description="Disordered" evidence="1">
    <location>
        <begin position="1"/>
        <end position="25"/>
    </location>
</feature>
<evidence type="ECO:0000256" key="1">
    <source>
        <dbReference type="SAM" id="MobiDB-lite"/>
    </source>
</evidence>
<evidence type="ECO:0000305" key="2"/>
<proteinExistence type="inferred from homology"/>
<organism>
    <name type="scientific">Lawsonia intracellularis</name>
    <dbReference type="NCBI Taxonomy" id="29546"/>
    <lineage>
        <taxon>Bacteria</taxon>
        <taxon>Pseudomonadati</taxon>
        <taxon>Thermodesulfobacteriota</taxon>
        <taxon>Desulfovibrionia</taxon>
        <taxon>Desulfovibrionales</taxon>
        <taxon>Desulfovibrionaceae</taxon>
        <taxon>Lawsonia</taxon>
    </lineage>
</organism>
<protein>
    <recommendedName>
        <fullName evidence="2">Large ribosomal subunit protein bL27</fullName>
    </recommendedName>
    <alternativeName>
        <fullName>50S ribosomal protein L27</fullName>
    </alternativeName>
</protein>
<accession>O87885</accession>
<sequence>MAHKKAGGSSRNGRDSPGQRRGIKRFGGQKVLAGNILVRQLGTKIHPGENVGMGRDYTLFAKVNGIVTYETYFRKCKRYSRVHIQPTV</sequence>
<dbReference type="EMBL" id="U45241">
    <property type="protein sequence ID" value="AAC36497.1"/>
    <property type="molecule type" value="Genomic_DNA"/>
</dbReference>
<dbReference type="RefSeq" id="WP_015353755.1">
    <property type="nucleotide sequence ID" value="NZ_QNHO01000001.1"/>
</dbReference>
<dbReference type="SMR" id="O87885"/>
<dbReference type="GO" id="GO:0022625">
    <property type="term" value="C:cytosolic large ribosomal subunit"/>
    <property type="evidence" value="ECO:0007669"/>
    <property type="project" value="TreeGrafter"/>
</dbReference>
<dbReference type="GO" id="GO:0003735">
    <property type="term" value="F:structural constituent of ribosome"/>
    <property type="evidence" value="ECO:0007669"/>
    <property type="project" value="InterPro"/>
</dbReference>
<dbReference type="GO" id="GO:0006412">
    <property type="term" value="P:translation"/>
    <property type="evidence" value="ECO:0007669"/>
    <property type="project" value="UniProtKB-UniRule"/>
</dbReference>
<dbReference type="FunFam" id="2.40.50.100:FF:000020">
    <property type="entry name" value="50S ribosomal protein L27"/>
    <property type="match status" value="1"/>
</dbReference>
<dbReference type="Gene3D" id="2.40.50.100">
    <property type="match status" value="1"/>
</dbReference>
<dbReference type="HAMAP" id="MF_00539">
    <property type="entry name" value="Ribosomal_bL27"/>
    <property type="match status" value="1"/>
</dbReference>
<dbReference type="InterPro" id="IPR001684">
    <property type="entry name" value="Ribosomal_bL27"/>
</dbReference>
<dbReference type="NCBIfam" id="TIGR00062">
    <property type="entry name" value="L27"/>
    <property type="match status" value="1"/>
</dbReference>
<dbReference type="PANTHER" id="PTHR15893:SF0">
    <property type="entry name" value="LARGE RIBOSOMAL SUBUNIT PROTEIN BL27M"/>
    <property type="match status" value="1"/>
</dbReference>
<dbReference type="PANTHER" id="PTHR15893">
    <property type="entry name" value="RIBOSOMAL PROTEIN L27"/>
    <property type="match status" value="1"/>
</dbReference>
<dbReference type="Pfam" id="PF01016">
    <property type="entry name" value="Ribosomal_L27"/>
    <property type="match status" value="1"/>
</dbReference>
<dbReference type="PRINTS" id="PR00063">
    <property type="entry name" value="RIBOSOMALL27"/>
</dbReference>
<dbReference type="SUPFAM" id="SSF110324">
    <property type="entry name" value="Ribosomal L27 protein-like"/>
    <property type="match status" value="1"/>
</dbReference>
<name>RL27_LAWIN</name>